<organism>
    <name type="scientific">Methanobrevibacter smithii (strain ATCC 35061 / DSM 861 / OCM 144 / PS)</name>
    <dbReference type="NCBI Taxonomy" id="420247"/>
    <lineage>
        <taxon>Archaea</taxon>
        <taxon>Methanobacteriati</taxon>
        <taxon>Methanobacteriota</taxon>
        <taxon>Methanomada group</taxon>
        <taxon>Methanobacteria</taxon>
        <taxon>Methanobacteriales</taxon>
        <taxon>Methanobacteriaceae</taxon>
        <taxon>Methanobrevibacter</taxon>
    </lineage>
</organism>
<accession>A5UJM2</accession>
<gene>
    <name type="ordered locus">Msm_0195</name>
</gene>
<evidence type="ECO:0000255" key="1">
    <source>
        <dbReference type="HAMAP-Rule" id="MF_00590"/>
    </source>
</evidence>
<protein>
    <recommendedName>
        <fullName evidence="1">GTP-dependent dephospho-CoA kinase</fullName>
        <ecNumber evidence="1">2.7.1.237</ecNumber>
    </recommendedName>
    <alternativeName>
        <fullName evidence="1">Dephospho-coenzyme A kinase</fullName>
        <shortName evidence="1">DPCK</shortName>
    </alternativeName>
</protein>
<name>DPCKG_METS3</name>
<sequence length="169" mass="18888">MLRLDAELNKDTISKLKKPLGKLYPHFEDAIEEIKSSEFLISVGDATFNNLTKYELYPDIGIIDNLIQRKNHNHEVIKAENILKAKNPAGTITDDLWETIGQAMKLSGDGNCHVIEVDGEEDLAVLPCILMASDETTILYGQPNEGLVLLKVCDAKDYAQNLIDTFIKE</sequence>
<comment type="function">
    <text evidence="1">Catalyzes the GTP-dependent phosphorylation of the 3'-hydroxyl group of dephosphocoenzyme A to form coenzyme A (CoA).</text>
</comment>
<comment type="catalytic activity">
    <reaction evidence="1">
        <text>3'-dephospho-CoA + GTP = GDP + CoA + H(+)</text>
        <dbReference type="Rhea" id="RHEA:61156"/>
        <dbReference type="ChEBI" id="CHEBI:15378"/>
        <dbReference type="ChEBI" id="CHEBI:37565"/>
        <dbReference type="ChEBI" id="CHEBI:57287"/>
        <dbReference type="ChEBI" id="CHEBI:57328"/>
        <dbReference type="ChEBI" id="CHEBI:58189"/>
        <dbReference type="EC" id="2.7.1.237"/>
    </reaction>
</comment>
<comment type="pathway">
    <text evidence="1">Cofactor biosynthesis; coenzyme A biosynthesis.</text>
</comment>
<comment type="similarity">
    <text evidence="1">Belongs to the GTP-dependent DPCK family.</text>
</comment>
<feature type="chain" id="PRO_0000380059" description="GTP-dependent dephospho-CoA kinase">
    <location>
        <begin position="1"/>
        <end position="169"/>
    </location>
</feature>
<feature type="binding site" evidence="1">
    <location>
        <position position="45"/>
    </location>
    <ligand>
        <name>GTP</name>
        <dbReference type="ChEBI" id="CHEBI:37565"/>
    </ligand>
</feature>
<feature type="binding site" evidence="1">
    <location>
        <position position="64"/>
    </location>
    <ligand>
        <name>GTP</name>
        <dbReference type="ChEBI" id="CHEBI:37565"/>
    </ligand>
</feature>
<feature type="binding site" evidence="1">
    <location>
        <position position="121"/>
    </location>
    <ligand>
        <name>GTP</name>
        <dbReference type="ChEBI" id="CHEBI:37565"/>
    </ligand>
</feature>
<reference key="1">
    <citation type="journal article" date="2007" name="Proc. Natl. Acad. Sci. U.S.A.">
        <title>Genomic and metabolic adaptations of Methanobrevibacter smithii to the human gut.</title>
        <authorList>
            <person name="Samuel B.S."/>
            <person name="Hansen E.E."/>
            <person name="Manchester J.K."/>
            <person name="Coutinho P.M."/>
            <person name="Henrissat B."/>
            <person name="Fulton R."/>
            <person name="Latreille P."/>
            <person name="Kim K."/>
            <person name="Wilson R.K."/>
            <person name="Gordon J.I."/>
        </authorList>
    </citation>
    <scope>NUCLEOTIDE SEQUENCE [LARGE SCALE GENOMIC DNA]</scope>
    <source>
        <strain>ATCC 35061 / DSM 861 / OCM 144 / PS</strain>
    </source>
</reference>
<proteinExistence type="inferred from homology"/>
<keyword id="KW-0173">Coenzyme A biosynthesis</keyword>
<keyword id="KW-0342">GTP-binding</keyword>
<keyword id="KW-0418">Kinase</keyword>
<keyword id="KW-0547">Nucleotide-binding</keyword>
<keyword id="KW-0808">Transferase</keyword>
<dbReference type="EC" id="2.7.1.237" evidence="1"/>
<dbReference type="EMBL" id="CP000678">
    <property type="protein sequence ID" value="ABQ86400.1"/>
    <property type="molecule type" value="Genomic_DNA"/>
</dbReference>
<dbReference type="RefSeq" id="WP_011953749.1">
    <property type="nucleotide sequence ID" value="NZ_CP117965.1"/>
</dbReference>
<dbReference type="SMR" id="A5UJM2"/>
<dbReference type="STRING" id="420247.Msm_0195"/>
<dbReference type="EnsemblBacteria" id="ABQ86400">
    <property type="protein sequence ID" value="ABQ86400"/>
    <property type="gene ID" value="Msm_0195"/>
</dbReference>
<dbReference type="KEGG" id="msi:Msm_0195"/>
<dbReference type="PATRIC" id="fig|420247.28.peg.199"/>
<dbReference type="eggNOG" id="arCOG04076">
    <property type="taxonomic scope" value="Archaea"/>
</dbReference>
<dbReference type="HOGENOM" id="CLU_120795_1_0_2"/>
<dbReference type="BioCyc" id="MSMI420247:GHWZ-196-MONOMER"/>
<dbReference type="UniPathway" id="UPA00241"/>
<dbReference type="Proteomes" id="UP000001992">
    <property type="component" value="Chromosome"/>
</dbReference>
<dbReference type="GO" id="GO:0005525">
    <property type="term" value="F:GTP binding"/>
    <property type="evidence" value="ECO:0007669"/>
    <property type="project" value="UniProtKB-UniRule"/>
</dbReference>
<dbReference type="GO" id="GO:0016301">
    <property type="term" value="F:kinase activity"/>
    <property type="evidence" value="ECO:0007669"/>
    <property type="project" value="UniProtKB-UniRule"/>
</dbReference>
<dbReference type="GO" id="GO:0015937">
    <property type="term" value="P:coenzyme A biosynthetic process"/>
    <property type="evidence" value="ECO:0007669"/>
    <property type="project" value="UniProtKB-UniRule"/>
</dbReference>
<dbReference type="HAMAP" id="MF_00590">
    <property type="entry name" value="Dephospho_CoA_kinase_GTP_dep"/>
    <property type="match status" value="1"/>
</dbReference>
<dbReference type="InterPro" id="IPR007164">
    <property type="entry name" value="GTP-dep_dephospho-CoA_kin"/>
</dbReference>
<dbReference type="PANTHER" id="PTHR40732:SF1">
    <property type="entry name" value="GTP-DEPENDENT DEPHOSPHO-COA KINASE"/>
    <property type="match status" value="1"/>
</dbReference>
<dbReference type="PANTHER" id="PTHR40732">
    <property type="entry name" value="UPF0218 PROTEIN TK1697"/>
    <property type="match status" value="1"/>
</dbReference>
<dbReference type="Pfam" id="PF04019">
    <property type="entry name" value="DUF359"/>
    <property type="match status" value="1"/>
</dbReference>
<dbReference type="PIRSF" id="PIRSF006533">
    <property type="entry name" value="UCP006533"/>
    <property type="match status" value="1"/>
</dbReference>